<keyword id="KW-0687">Ribonucleoprotein</keyword>
<keyword id="KW-0689">Ribosomal protein</keyword>
<comment type="similarity">
    <text evidence="1">Belongs to the bacterial ribosomal protein bL36 family.</text>
</comment>
<comment type="sequence caution" evidence="2">
    <conflict type="erroneous initiation">
        <sequence resource="EMBL-CDS" id="BAG13588"/>
    </conflict>
</comment>
<feature type="chain" id="PRO_0000344726" description="Large ribosomal subunit protein bL36">
    <location>
        <begin position="1"/>
        <end position="37"/>
    </location>
</feature>
<reference key="1">
    <citation type="journal article" date="2008" name="Proc. Natl. Acad. Sci. U.S.A.">
        <title>Complete genome of the uncultured termite group 1 bacteria in a single host protist cell.</title>
        <authorList>
            <person name="Hongoh Y."/>
            <person name="Sharma V.K."/>
            <person name="Prakash T."/>
            <person name="Noda S."/>
            <person name="Taylor T.D."/>
            <person name="Kudo T."/>
            <person name="Sakaki Y."/>
            <person name="Toyoda A."/>
            <person name="Hattori M."/>
            <person name="Ohkuma M."/>
        </authorList>
    </citation>
    <scope>NUCLEOTIDE SEQUENCE [LARGE SCALE GENOMIC DNA]</scope>
</reference>
<accession>B1GZA6</accession>
<evidence type="ECO:0000255" key="1">
    <source>
        <dbReference type="HAMAP-Rule" id="MF_00251"/>
    </source>
</evidence>
<evidence type="ECO:0000305" key="2"/>
<name>RL36_ENDTX</name>
<dbReference type="EMBL" id="AP009510">
    <property type="protein sequence ID" value="BAG13588.1"/>
    <property type="status" value="ALT_INIT"/>
    <property type="molecule type" value="Genomic_DNA"/>
</dbReference>
<dbReference type="RefSeq" id="WP_095558973.1">
    <property type="nucleotide sequence ID" value="NC_020419.1"/>
</dbReference>
<dbReference type="SMR" id="B1GZA6"/>
<dbReference type="STRING" id="471821.TGRD_105"/>
<dbReference type="KEGG" id="rsd:TGRD_105"/>
<dbReference type="PATRIC" id="fig|471821.5.peg.149"/>
<dbReference type="HOGENOM" id="CLU_135723_6_1_0"/>
<dbReference type="Proteomes" id="UP000001691">
    <property type="component" value="Chromosome"/>
</dbReference>
<dbReference type="GO" id="GO:0005737">
    <property type="term" value="C:cytoplasm"/>
    <property type="evidence" value="ECO:0007669"/>
    <property type="project" value="UniProtKB-ARBA"/>
</dbReference>
<dbReference type="GO" id="GO:1990904">
    <property type="term" value="C:ribonucleoprotein complex"/>
    <property type="evidence" value="ECO:0007669"/>
    <property type="project" value="UniProtKB-KW"/>
</dbReference>
<dbReference type="GO" id="GO:0005840">
    <property type="term" value="C:ribosome"/>
    <property type="evidence" value="ECO:0007669"/>
    <property type="project" value="UniProtKB-KW"/>
</dbReference>
<dbReference type="GO" id="GO:0003735">
    <property type="term" value="F:structural constituent of ribosome"/>
    <property type="evidence" value="ECO:0007669"/>
    <property type="project" value="InterPro"/>
</dbReference>
<dbReference type="GO" id="GO:0006412">
    <property type="term" value="P:translation"/>
    <property type="evidence" value="ECO:0007669"/>
    <property type="project" value="UniProtKB-UniRule"/>
</dbReference>
<dbReference type="HAMAP" id="MF_00251">
    <property type="entry name" value="Ribosomal_bL36"/>
    <property type="match status" value="1"/>
</dbReference>
<dbReference type="InterPro" id="IPR000473">
    <property type="entry name" value="Ribosomal_bL36"/>
</dbReference>
<dbReference type="InterPro" id="IPR035977">
    <property type="entry name" value="Ribosomal_bL36_sp"/>
</dbReference>
<dbReference type="NCBIfam" id="TIGR01022">
    <property type="entry name" value="rpmJ_bact"/>
    <property type="match status" value="1"/>
</dbReference>
<dbReference type="PANTHER" id="PTHR42888">
    <property type="entry name" value="50S RIBOSOMAL PROTEIN L36, CHLOROPLASTIC"/>
    <property type="match status" value="1"/>
</dbReference>
<dbReference type="PANTHER" id="PTHR42888:SF1">
    <property type="entry name" value="LARGE RIBOSOMAL SUBUNIT PROTEIN BL36C"/>
    <property type="match status" value="1"/>
</dbReference>
<dbReference type="Pfam" id="PF00444">
    <property type="entry name" value="Ribosomal_L36"/>
    <property type="match status" value="1"/>
</dbReference>
<dbReference type="SUPFAM" id="SSF57840">
    <property type="entry name" value="Ribosomal protein L36"/>
    <property type="match status" value="1"/>
</dbReference>
<dbReference type="PROSITE" id="PS00828">
    <property type="entry name" value="RIBOSOMAL_L36"/>
    <property type="match status" value="1"/>
</dbReference>
<sequence>MKVKASVKPICQKCKVVKRKGVVRVICQDPRHKQRQG</sequence>
<proteinExistence type="inferred from homology"/>
<protein>
    <recommendedName>
        <fullName evidence="1">Large ribosomal subunit protein bL36</fullName>
    </recommendedName>
    <alternativeName>
        <fullName evidence="2">50S ribosomal protein L36</fullName>
    </alternativeName>
</protein>
<gene>
    <name evidence="1" type="primary">rpmJ</name>
    <name type="ordered locus">TGRD_105</name>
</gene>
<organism>
    <name type="scientific">Endomicrobium trichonymphae</name>
    <dbReference type="NCBI Taxonomy" id="1408204"/>
    <lineage>
        <taxon>Bacteria</taxon>
        <taxon>Pseudomonadati</taxon>
        <taxon>Elusimicrobiota</taxon>
        <taxon>Endomicrobiia</taxon>
        <taxon>Endomicrobiales</taxon>
        <taxon>Endomicrobiaceae</taxon>
        <taxon>Candidatus Endomicrobiellum</taxon>
    </lineage>
</organism>